<comment type="function">
    <text evidence="1">Involved in the TCA cycle. Catalyzes the stereospecific interconversion of fumarate to L-malate.</text>
</comment>
<comment type="catalytic activity">
    <reaction evidence="1">
        <text>(S)-malate = fumarate + H2O</text>
        <dbReference type="Rhea" id="RHEA:12460"/>
        <dbReference type="ChEBI" id="CHEBI:15377"/>
        <dbReference type="ChEBI" id="CHEBI:15589"/>
        <dbReference type="ChEBI" id="CHEBI:29806"/>
        <dbReference type="EC" id="4.2.1.2"/>
    </reaction>
</comment>
<comment type="pathway">
    <text evidence="1">Carbohydrate metabolism; tricarboxylic acid cycle; (S)-malate from fumarate: step 1/1.</text>
</comment>
<comment type="subunit">
    <text evidence="1">Homotetramer.</text>
</comment>
<comment type="subcellular location">
    <subcellularLocation>
        <location evidence="1">Cytoplasm</location>
    </subcellularLocation>
</comment>
<comment type="miscellaneous">
    <text evidence="1">There are 2 substrate-binding sites: the catalytic A site, and the non-catalytic B site that may play a role in the transfer of substrate or product between the active site and the solvent. Alternatively, the B site may bind allosteric effectors.</text>
</comment>
<comment type="similarity">
    <text evidence="1">Belongs to the class-II fumarase/aspartase family. Fumarase subfamily.</text>
</comment>
<comment type="sequence caution" evidence="2">
    <conflict type="erroneous initiation">
        <sequence resource="EMBL-CDS" id="CAF19712"/>
    </conflict>
    <text>Truncated N-terminus.</text>
</comment>
<keyword id="KW-0963">Cytoplasm</keyword>
<keyword id="KW-0456">Lyase</keyword>
<keyword id="KW-1185">Reference proteome</keyword>
<keyword id="KW-0816">Tricarboxylic acid cycle</keyword>
<sequence>MSDFMTEQEFRIEHDTMGEVKVPAKALWQAQTQRAVENFPISGRGLESAQIRAMGLLKAACAQVNKDSGALDAEKADAIIAAGKEIASGKHDAEFPIDVFQTGSGTSSNMNTNEVIASIAKANGVEVHPNDHVNMGQSSNDTFPTATHVAATEAAVNDLIPGLKVLHESLAKKANEWSEVVKSGRTHLMDAVPVTLGQEFGGYARQIQLGIERVEATLPRLGELAIGGTAAGTGINTSADFGGKVVAELINLTDVKELKEAENHFEAQAARDALVEFSGAMRVIAVSLYKIANDIRLMGSGPLTGLGEIRLPDLQPGSSIMPGKVNPVLCETATQVSAQVIGNDAAVAFSGTQGQFELNVFIPVMARNVLESARLLANTSRVFATRLVDGIEPNEAHMKELAESSPSIVTPLNSAIGYEAAAKVAKTALAEGKTIRQTVIDLGLVDGEKLTEEELDKRLDVLAMAHTERENKF</sequence>
<reference key="1">
    <citation type="journal article" date="2003" name="Appl. Microbiol. Biotechnol.">
        <title>The Corynebacterium glutamicum genome: features and impacts on biotechnological processes.</title>
        <authorList>
            <person name="Ikeda M."/>
            <person name="Nakagawa S."/>
        </authorList>
    </citation>
    <scope>NUCLEOTIDE SEQUENCE [LARGE SCALE GENOMIC DNA]</scope>
    <source>
        <strain>ATCC 13032 / DSM 20300 / JCM 1318 / BCRC 11384 / CCUG 27702 / LMG 3730 / NBRC 12168 / NCIMB 10025 / NRRL B-2784 / 534</strain>
    </source>
</reference>
<reference key="2">
    <citation type="journal article" date="2003" name="J. Biotechnol.">
        <title>The complete Corynebacterium glutamicum ATCC 13032 genome sequence and its impact on the production of L-aspartate-derived amino acids and vitamins.</title>
        <authorList>
            <person name="Kalinowski J."/>
            <person name="Bathe B."/>
            <person name="Bartels D."/>
            <person name="Bischoff N."/>
            <person name="Bott M."/>
            <person name="Burkovski A."/>
            <person name="Dusch N."/>
            <person name="Eggeling L."/>
            <person name="Eikmanns B.J."/>
            <person name="Gaigalat L."/>
            <person name="Goesmann A."/>
            <person name="Hartmann M."/>
            <person name="Huthmacher K."/>
            <person name="Kraemer R."/>
            <person name="Linke B."/>
            <person name="McHardy A.C."/>
            <person name="Meyer F."/>
            <person name="Moeckel B."/>
            <person name="Pfefferle W."/>
            <person name="Puehler A."/>
            <person name="Rey D.A."/>
            <person name="Rueckert C."/>
            <person name="Rupp O."/>
            <person name="Sahm H."/>
            <person name="Wendisch V.F."/>
            <person name="Wiegraebe I."/>
            <person name="Tauch A."/>
        </authorList>
    </citation>
    <scope>NUCLEOTIDE SEQUENCE [LARGE SCALE GENOMIC DNA]</scope>
    <source>
        <strain>ATCC 13032 / DSM 20300 / JCM 1318 / BCRC 11384 / CCUG 27702 / LMG 3730 / NBRC 12168 / NCIMB 10025 / NRRL B-2784 / 534</strain>
    </source>
</reference>
<protein>
    <recommendedName>
        <fullName evidence="1">Fumarate hydratase class II</fullName>
        <shortName evidence="1">Fumarase C</shortName>
        <ecNumber evidence="1">4.2.1.2</ecNumber>
    </recommendedName>
    <alternativeName>
        <fullName evidence="1">Aerobic fumarase</fullName>
    </alternativeName>
    <alternativeName>
        <fullName evidence="1">Iron-independent fumarase</fullName>
    </alternativeName>
</protein>
<feature type="chain" id="PRO_0000161272" description="Fumarate hydratase class II">
    <location>
        <begin position="1"/>
        <end position="473"/>
    </location>
</feature>
<feature type="active site" description="Proton donor/acceptor" evidence="1">
    <location>
        <position position="187"/>
    </location>
</feature>
<feature type="active site" evidence="1">
    <location>
        <position position="318"/>
    </location>
</feature>
<feature type="binding site" evidence="1">
    <location>
        <begin position="104"/>
        <end position="106"/>
    </location>
    <ligand>
        <name>substrate</name>
    </ligand>
</feature>
<feature type="binding site" description="in site B" evidence="1">
    <location>
        <begin position="128"/>
        <end position="131"/>
    </location>
    <ligand>
        <name>substrate</name>
    </ligand>
</feature>
<feature type="binding site" evidence="1">
    <location>
        <begin position="138"/>
        <end position="140"/>
    </location>
    <ligand>
        <name>substrate</name>
    </ligand>
</feature>
<feature type="binding site" evidence="1">
    <location>
        <position position="186"/>
    </location>
    <ligand>
        <name>substrate</name>
    </ligand>
</feature>
<feature type="binding site" evidence="1">
    <location>
        <position position="319"/>
    </location>
    <ligand>
        <name>substrate</name>
    </ligand>
</feature>
<feature type="binding site" evidence="1">
    <location>
        <begin position="324"/>
        <end position="326"/>
    </location>
    <ligand>
        <name>substrate</name>
    </ligand>
</feature>
<feature type="site" description="Important for catalytic activity" evidence="1">
    <location>
        <position position="331"/>
    </location>
</feature>
<organism>
    <name type="scientific">Corynebacterium glutamicum (strain ATCC 13032 / DSM 20300 / JCM 1318 / BCRC 11384 / CCUG 27702 / LMG 3730 / NBRC 12168 / NCIMB 10025 / NRRL B-2784 / 534)</name>
    <dbReference type="NCBI Taxonomy" id="196627"/>
    <lineage>
        <taxon>Bacteria</taxon>
        <taxon>Bacillati</taxon>
        <taxon>Actinomycetota</taxon>
        <taxon>Actinomycetes</taxon>
        <taxon>Mycobacteriales</taxon>
        <taxon>Corynebacteriaceae</taxon>
        <taxon>Corynebacterium</taxon>
    </lineage>
</organism>
<evidence type="ECO:0000255" key="1">
    <source>
        <dbReference type="HAMAP-Rule" id="MF_00743"/>
    </source>
</evidence>
<evidence type="ECO:0000305" key="2"/>
<dbReference type="EC" id="4.2.1.2" evidence="1"/>
<dbReference type="EMBL" id="BA000036">
    <property type="protein sequence ID" value="BAB98403.1"/>
    <property type="molecule type" value="Genomic_DNA"/>
</dbReference>
<dbReference type="EMBL" id="BX927151">
    <property type="protein sequence ID" value="CAF19712.1"/>
    <property type="status" value="ALT_INIT"/>
    <property type="molecule type" value="Genomic_DNA"/>
</dbReference>
<dbReference type="RefSeq" id="NP_600233.1">
    <property type="nucleotide sequence ID" value="NC_003450.3"/>
</dbReference>
<dbReference type="SMR" id="Q8NRN8"/>
<dbReference type="STRING" id="196627.cg1145"/>
<dbReference type="KEGG" id="cgb:cg1145"/>
<dbReference type="KEGG" id="cgl:Cgl1010"/>
<dbReference type="PATRIC" id="fig|196627.13.peg.990"/>
<dbReference type="eggNOG" id="COG0114">
    <property type="taxonomic scope" value="Bacteria"/>
</dbReference>
<dbReference type="HOGENOM" id="CLU_021594_4_1_11"/>
<dbReference type="OrthoDB" id="9802809at2"/>
<dbReference type="BioCyc" id="CORYNE:G18NG-10582-MONOMER"/>
<dbReference type="BRENDA" id="4.2.1.2">
    <property type="organism ID" value="960"/>
</dbReference>
<dbReference type="SABIO-RK" id="Q8NRN8"/>
<dbReference type="UniPathway" id="UPA00223">
    <property type="reaction ID" value="UER01007"/>
</dbReference>
<dbReference type="Proteomes" id="UP000000582">
    <property type="component" value="Chromosome"/>
</dbReference>
<dbReference type="Proteomes" id="UP000001009">
    <property type="component" value="Chromosome"/>
</dbReference>
<dbReference type="GO" id="GO:0005737">
    <property type="term" value="C:cytoplasm"/>
    <property type="evidence" value="ECO:0007669"/>
    <property type="project" value="UniProtKB-SubCell"/>
</dbReference>
<dbReference type="GO" id="GO:0004333">
    <property type="term" value="F:fumarate hydratase activity"/>
    <property type="evidence" value="ECO:0007669"/>
    <property type="project" value="UniProtKB-UniRule"/>
</dbReference>
<dbReference type="GO" id="GO:0006106">
    <property type="term" value="P:fumarate metabolic process"/>
    <property type="evidence" value="ECO:0007669"/>
    <property type="project" value="InterPro"/>
</dbReference>
<dbReference type="GO" id="GO:0006099">
    <property type="term" value="P:tricarboxylic acid cycle"/>
    <property type="evidence" value="ECO:0007669"/>
    <property type="project" value="UniProtKB-UniRule"/>
</dbReference>
<dbReference type="CDD" id="cd01362">
    <property type="entry name" value="Fumarase_classII"/>
    <property type="match status" value="1"/>
</dbReference>
<dbReference type="FunFam" id="1.10.40.30:FF:000002">
    <property type="entry name" value="Fumarate hydratase class II"/>
    <property type="match status" value="1"/>
</dbReference>
<dbReference type="FunFam" id="1.10.275.10:FF:000001">
    <property type="entry name" value="Fumarate hydratase, mitochondrial"/>
    <property type="match status" value="1"/>
</dbReference>
<dbReference type="FunFam" id="1.20.200.10:FF:000001">
    <property type="entry name" value="Fumarate hydratase, mitochondrial"/>
    <property type="match status" value="1"/>
</dbReference>
<dbReference type="Gene3D" id="1.10.40.30">
    <property type="entry name" value="Fumarase/aspartase (C-terminal domain)"/>
    <property type="match status" value="1"/>
</dbReference>
<dbReference type="Gene3D" id="1.20.200.10">
    <property type="entry name" value="Fumarase/aspartase (Central domain)"/>
    <property type="match status" value="1"/>
</dbReference>
<dbReference type="Gene3D" id="1.10.275.10">
    <property type="entry name" value="Fumarase/aspartase (N-terminal domain)"/>
    <property type="match status" value="1"/>
</dbReference>
<dbReference type="HAMAP" id="MF_00743">
    <property type="entry name" value="FumaraseC"/>
    <property type="match status" value="1"/>
</dbReference>
<dbReference type="InterPro" id="IPR005677">
    <property type="entry name" value="Fum_hydII"/>
</dbReference>
<dbReference type="InterPro" id="IPR024083">
    <property type="entry name" value="Fumarase/histidase_N"/>
</dbReference>
<dbReference type="InterPro" id="IPR018951">
    <property type="entry name" value="Fumarase_C_C"/>
</dbReference>
<dbReference type="InterPro" id="IPR020557">
    <property type="entry name" value="Fumarate_lyase_CS"/>
</dbReference>
<dbReference type="InterPro" id="IPR000362">
    <property type="entry name" value="Fumarate_lyase_fam"/>
</dbReference>
<dbReference type="InterPro" id="IPR022761">
    <property type="entry name" value="Fumarate_lyase_N"/>
</dbReference>
<dbReference type="InterPro" id="IPR008948">
    <property type="entry name" value="L-Aspartase-like"/>
</dbReference>
<dbReference type="NCBIfam" id="NF008909">
    <property type="entry name" value="PRK12273.1"/>
    <property type="match status" value="1"/>
</dbReference>
<dbReference type="PANTHER" id="PTHR11444">
    <property type="entry name" value="ASPARTATEAMMONIA/ARGININOSUCCINATE/ADENYLOSUCCINATE LYASE"/>
    <property type="match status" value="1"/>
</dbReference>
<dbReference type="PANTHER" id="PTHR11444:SF22">
    <property type="entry name" value="FUMARATE HYDRATASE CLASS II"/>
    <property type="match status" value="1"/>
</dbReference>
<dbReference type="Pfam" id="PF10415">
    <property type="entry name" value="FumaraseC_C"/>
    <property type="match status" value="1"/>
</dbReference>
<dbReference type="Pfam" id="PF00206">
    <property type="entry name" value="Lyase_1"/>
    <property type="match status" value="1"/>
</dbReference>
<dbReference type="PRINTS" id="PR00145">
    <property type="entry name" value="ARGSUCLYASE"/>
</dbReference>
<dbReference type="PRINTS" id="PR00149">
    <property type="entry name" value="FUMRATELYASE"/>
</dbReference>
<dbReference type="SUPFAM" id="SSF48557">
    <property type="entry name" value="L-aspartase-like"/>
    <property type="match status" value="1"/>
</dbReference>
<dbReference type="PROSITE" id="PS00163">
    <property type="entry name" value="FUMARATE_LYASES"/>
    <property type="match status" value="1"/>
</dbReference>
<gene>
    <name evidence="1" type="primary">fumC</name>
    <name type="synonym">fum</name>
    <name type="ordered locus">Cgl1010</name>
    <name type="ordered locus">cg1145</name>
</gene>
<name>FUMC_CORGL</name>
<proteinExistence type="inferred from homology"/>
<accession>Q8NRN8</accession>